<name>GPDA_WOLWR</name>
<reference key="1">
    <citation type="journal article" date="2009" name="Proc. Natl. Acad. Sci. U.S.A.">
        <title>The mosaic genome structure of the Wolbachia wRi strain infecting Drosophila simulans.</title>
        <authorList>
            <person name="Klasson L."/>
            <person name="Westberg J."/>
            <person name="Sapountzis P."/>
            <person name="Naeslund K."/>
            <person name="Lutnaes Y."/>
            <person name="Darby A.C."/>
            <person name="Veneti Z."/>
            <person name="Chen L."/>
            <person name="Braig H.R."/>
            <person name="Garrett R."/>
            <person name="Bourtzis K."/>
            <person name="Andersson S.G."/>
        </authorList>
    </citation>
    <scope>NUCLEOTIDE SEQUENCE [LARGE SCALE GENOMIC DNA]</scope>
    <source>
        <strain>wRi</strain>
    </source>
</reference>
<proteinExistence type="inferred from homology"/>
<keyword id="KW-0963">Cytoplasm</keyword>
<keyword id="KW-0444">Lipid biosynthesis</keyword>
<keyword id="KW-0443">Lipid metabolism</keyword>
<keyword id="KW-0520">NAD</keyword>
<keyword id="KW-0521">NADP</keyword>
<keyword id="KW-0547">Nucleotide-binding</keyword>
<keyword id="KW-0560">Oxidoreductase</keyword>
<keyword id="KW-0594">Phospholipid biosynthesis</keyword>
<keyword id="KW-1208">Phospholipid metabolism</keyword>
<evidence type="ECO:0000255" key="1">
    <source>
        <dbReference type="HAMAP-Rule" id="MF_00394"/>
    </source>
</evidence>
<accession>C0R3K2</accession>
<sequence>MAISILGAGAWGTAIAISLGSKKDVILWTRNETTFESINGKRESDKLPGCRISDNVSVKLAIEDTINASVTILAVPTQSLRKVCQQLHNCNLKKDVAIILACKGIEKSTLKLPSEIVNEILPNNPIAIFSGPSFAVEVARKLPYSMVLACQNNTLGSKLVSELQQENVKLEFSNDIIGVQICAALKNVFAIACGIVLGSKLGFNAHAALITKSMSEIKALYSAKIGDGSVDINTLLGPACLGDLIMTCTSLNSRNLSFGFKIGNSDNGFNVQQILSEGKSVIEGFSTAESIFNLAGKLKIKMPICEAVYRLLYESASIEDTISVLIS</sequence>
<gene>
    <name evidence="1" type="primary">gpsA</name>
    <name type="ordered locus">WRi_007450</name>
</gene>
<comment type="function">
    <text evidence="1">Catalyzes the reduction of the glycolytic intermediate dihydroxyacetone phosphate (DHAP) to sn-glycerol 3-phosphate (G3P), the key precursor for phospholipid synthesis.</text>
</comment>
<comment type="catalytic activity">
    <reaction evidence="1">
        <text>sn-glycerol 3-phosphate + NAD(+) = dihydroxyacetone phosphate + NADH + H(+)</text>
        <dbReference type="Rhea" id="RHEA:11092"/>
        <dbReference type="ChEBI" id="CHEBI:15378"/>
        <dbReference type="ChEBI" id="CHEBI:57540"/>
        <dbReference type="ChEBI" id="CHEBI:57597"/>
        <dbReference type="ChEBI" id="CHEBI:57642"/>
        <dbReference type="ChEBI" id="CHEBI:57945"/>
        <dbReference type="EC" id="1.1.1.94"/>
    </reaction>
    <physiologicalReaction direction="right-to-left" evidence="1">
        <dbReference type="Rhea" id="RHEA:11094"/>
    </physiologicalReaction>
</comment>
<comment type="catalytic activity">
    <reaction evidence="1">
        <text>sn-glycerol 3-phosphate + NADP(+) = dihydroxyacetone phosphate + NADPH + H(+)</text>
        <dbReference type="Rhea" id="RHEA:11096"/>
        <dbReference type="ChEBI" id="CHEBI:15378"/>
        <dbReference type="ChEBI" id="CHEBI:57597"/>
        <dbReference type="ChEBI" id="CHEBI:57642"/>
        <dbReference type="ChEBI" id="CHEBI:57783"/>
        <dbReference type="ChEBI" id="CHEBI:58349"/>
        <dbReference type="EC" id="1.1.1.94"/>
    </reaction>
    <physiologicalReaction direction="right-to-left" evidence="1">
        <dbReference type="Rhea" id="RHEA:11098"/>
    </physiologicalReaction>
</comment>
<comment type="pathway">
    <text evidence="1">Membrane lipid metabolism; glycerophospholipid metabolism.</text>
</comment>
<comment type="subcellular location">
    <subcellularLocation>
        <location evidence="1">Cytoplasm</location>
    </subcellularLocation>
</comment>
<comment type="similarity">
    <text evidence="1">Belongs to the NAD-dependent glycerol-3-phosphate dehydrogenase family.</text>
</comment>
<organism>
    <name type="scientific">Wolbachia sp. subsp. Drosophila simulans (strain wRi)</name>
    <dbReference type="NCBI Taxonomy" id="66084"/>
    <lineage>
        <taxon>Bacteria</taxon>
        <taxon>Pseudomonadati</taxon>
        <taxon>Pseudomonadota</taxon>
        <taxon>Alphaproteobacteria</taxon>
        <taxon>Rickettsiales</taxon>
        <taxon>Anaplasmataceae</taxon>
        <taxon>Wolbachieae</taxon>
        <taxon>Wolbachia</taxon>
    </lineage>
</organism>
<protein>
    <recommendedName>
        <fullName evidence="1">Glycerol-3-phosphate dehydrogenase [NAD(P)+]</fullName>
        <ecNumber evidence="1">1.1.1.94</ecNumber>
    </recommendedName>
    <alternativeName>
        <fullName evidence="1">NAD(P)(+)-dependent glycerol-3-phosphate dehydrogenase</fullName>
    </alternativeName>
    <alternativeName>
        <fullName evidence="1">NAD(P)H-dependent dihydroxyacetone-phosphate reductase</fullName>
    </alternativeName>
</protein>
<feature type="chain" id="PRO_1000190182" description="Glycerol-3-phosphate dehydrogenase [NAD(P)+]">
    <location>
        <begin position="1"/>
        <end position="327"/>
    </location>
</feature>
<feature type="active site" description="Proton acceptor" evidence="1">
    <location>
        <position position="186"/>
    </location>
</feature>
<feature type="binding site" evidence="1">
    <location>
        <position position="11"/>
    </location>
    <ligand>
        <name>NADPH</name>
        <dbReference type="ChEBI" id="CHEBI:57783"/>
    </ligand>
</feature>
<feature type="binding site" evidence="1">
    <location>
        <position position="30"/>
    </location>
    <ligand>
        <name>NADPH</name>
        <dbReference type="ChEBI" id="CHEBI:57783"/>
    </ligand>
</feature>
<feature type="binding site" evidence="1">
    <location>
        <position position="103"/>
    </location>
    <ligand>
        <name>NADPH</name>
        <dbReference type="ChEBI" id="CHEBI:57783"/>
    </ligand>
</feature>
<feature type="binding site" evidence="1">
    <location>
        <position position="103"/>
    </location>
    <ligand>
        <name>sn-glycerol 3-phosphate</name>
        <dbReference type="ChEBI" id="CHEBI:57597"/>
    </ligand>
</feature>
<feature type="binding site" evidence="1">
    <location>
        <position position="131"/>
    </location>
    <ligand>
        <name>sn-glycerol 3-phosphate</name>
        <dbReference type="ChEBI" id="CHEBI:57597"/>
    </ligand>
</feature>
<feature type="binding site" evidence="1">
    <location>
        <position position="133"/>
    </location>
    <ligand>
        <name>sn-glycerol 3-phosphate</name>
        <dbReference type="ChEBI" id="CHEBI:57597"/>
    </ligand>
</feature>
<feature type="binding site" evidence="1">
    <location>
        <position position="135"/>
    </location>
    <ligand>
        <name>NADPH</name>
        <dbReference type="ChEBI" id="CHEBI:57783"/>
    </ligand>
</feature>
<feature type="binding site" evidence="1">
    <location>
        <position position="186"/>
    </location>
    <ligand>
        <name>sn-glycerol 3-phosphate</name>
        <dbReference type="ChEBI" id="CHEBI:57597"/>
    </ligand>
</feature>
<feature type="binding site" evidence="1">
    <location>
        <position position="243"/>
    </location>
    <ligand>
        <name>sn-glycerol 3-phosphate</name>
        <dbReference type="ChEBI" id="CHEBI:57597"/>
    </ligand>
</feature>
<feature type="binding site" evidence="1">
    <location>
        <position position="253"/>
    </location>
    <ligand>
        <name>sn-glycerol 3-phosphate</name>
        <dbReference type="ChEBI" id="CHEBI:57597"/>
    </ligand>
</feature>
<feature type="binding site" evidence="1">
    <location>
        <position position="254"/>
    </location>
    <ligand>
        <name>NADPH</name>
        <dbReference type="ChEBI" id="CHEBI:57783"/>
    </ligand>
</feature>
<feature type="binding site" evidence="1">
    <location>
        <position position="254"/>
    </location>
    <ligand>
        <name>sn-glycerol 3-phosphate</name>
        <dbReference type="ChEBI" id="CHEBI:57597"/>
    </ligand>
</feature>
<feature type="binding site" evidence="1">
    <location>
        <position position="255"/>
    </location>
    <ligand>
        <name>sn-glycerol 3-phosphate</name>
        <dbReference type="ChEBI" id="CHEBI:57597"/>
    </ligand>
</feature>
<feature type="binding site" evidence="1">
    <location>
        <position position="281"/>
    </location>
    <ligand>
        <name>NADPH</name>
        <dbReference type="ChEBI" id="CHEBI:57783"/>
    </ligand>
</feature>
<feature type="binding site" evidence="1">
    <location>
        <position position="283"/>
    </location>
    <ligand>
        <name>NADPH</name>
        <dbReference type="ChEBI" id="CHEBI:57783"/>
    </ligand>
</feature>
<dbReference type="EC" id="1.1.1.94" evidence="1"/>
<dbReference type="EMBL" id="CP001391">
    <property type="protein sequence ID" value="ACN95494.1"/>
    <property type="molecule type" value="Genomic_DNA"/>
</dbReference>
<dbReference type="RefSeq" id="WP_006280098.1">
    <property type="nucleotide sequence ID" value="NZ_MKIF01000037.1"/>
</dbReference>
<dbReference type="SMR" id="C0R3K2"/>
<dbReference type="STRING" id="66084.WRi_007450"/>
<dbReference type="KEGG" id="wri:WRi_007450"/>
<dbReference type="HOGENOM" id="CLU_033449_0_0_5"/>
<dbReference type="UniPathway" id="UPA00940"/>
<dbReference type="Proteomes" id="UP000001293">
    <property type="component" value="Chromosome"/>
</dbReference>
<dbReference type="GO" id="GO:0005829">
    <property type="term" value="C:cytosol"/>
    <property type="evidence" value="ECO:0007669"/>
    <property type="project" value="TreeGrafter"/>
</dbReference>
<dbReference type="GO" id="GO:0047952">
    <property type="term" value="F:glycerol-3-phosphate dehydrogenase [NAD(P)+] activity"/>
    <property type="evidence" value="ECO:0007669"/>
    <property type="project" value="UniProtKB-UniRule"/>
</dbReference>
<dbReference type="GO" id="GO:0051287">
    <property type="term" value="F:NAD binding"/>
    <property type="evidence" value="ECO:0007669"/>
    <property type="project" value="InterPro"/>
</dbReference>
<dbReference type="GO" id="GO:0005975">
    <property type="term" value="P:carbohydrate metabolic process"/>
    <property type="evidence" value="ECO:0007669"/>
    <property type="project" value="InterPro"/>
</dbReference>
<dbReference type="GO" id="GO:0046167">
    <property type="term" value="P:glycerol-3-phosphate biosynthetic process"/>
    <property type="evidence" value="ECO:0007669"/>
    <property type="project" value="UniProtKB-UniRule"/>
</dbReference>
<dbReference type="GO" id="GO:0046168">
    <property type="term" value="P:glycerol-3-phosphate catabolic process"/>
    <property type="evidence" value="ECO:0007669"/>
    <property type="project" value="InterPro"/>
</dbReference>
<dbReference type="GO" id="GO:0006650">
    <property type="term" value="P:glycerophospholipid metabolic process"/>
    <property type="evidence" value="ECO:0007669"/>
    <property type="project" value="UniProtKB-UniRule"/>
</dbReference>
<dbReference type="GO" id="GO:0008654">
    <property type="term" value="P:phospholipid biosynthetic process"/>
    <property type="evidence" value="ECO:0007669"/>
    <property type="project" value="UniProtKB-KW"/>
</dbReference>
<dbReference type="Gene3D" id="1.10.1040.10">
    <property type="entry name" value="N-(1-d-carboxylethyl)-l-norvaline Dehydrogenase, domain 2"/>
    <property type="match status" value="1"/>
</dbReference>
<dbReference type="Gene3D" id="3.40.50.720">
    <property type="entry name" value="NAD(P)-binding Rossmann-like Domain"/>
    <property type="match status" value="1"/>
</dbReference>
<dbReference type="HAMAP" id="MF_00394">
    <property type="entry name" value="NAD_Glyc3P_dehydrog"/>
    <property type="match status" value="1"/>
</dbReference>
<dbReference type="InterPro" id="IPR008927">
    <property type="entry name" value="6-PGluconate_DH-like_C_sf"/>
</dbReference>
<dbReference type="InterPro" id="IPR013328">
    <property type="entry name" value="6PGD_dom2"/>
</dbReference>
<dbReference type="InterPro" id="IPR006168">
    <property type="entry name" value="G3P_DH_NAD-dep"/>
</dbReference>
<dbReference type="InterPro" id="IPR006109">
    <property type="entry name" value="G3P_DH_NAD-dep_C"/>
</dbReference>
<dbReference type="InterPro" id="IPR011128">
    <property type="entry name" value="G3P_DH_NAD-dep_N"/>
</dbReference>
<dbReference type="InterPro" id="IPR036291">
    <property type="entry name" value="NAD(P)-bd_dom_sf"/>
</dbReference>
<dbReference type="NCBIfam" id="NF000940">
    <property type="entry name" value="PRK00094.1-2"/>
    <property type="match status" value="1"/>
</dbReference>
<dbReference type="NCBIfam" id="NF000942">
    <property type="entry name" value="PRK00094.1-4"/>
    <property type="match status" value="1"/>
</dbReference>
<dbReference type="NCBIfam" id="NF011213">
    <property type="entry name" value="PRK14620.1"/>
    <property type="match status" value="1"/>
</dbReference>
<dbReference type="PANTHER" id="PTHR11728">
    <property type="entry name" value="GLYCEROL-3-PHOSPHATE DEHYDROGENASE"/>
    <property type="match status" value="1"/>
</dbReference>
<dbReference type="PANTHER" id="PTHR11728:SF1">
    <property type="entry name" value="GLYCEROL-3-PHOSPHATE DEHYDROGENASE [NAD(+)] 2, CHLOROPLASTIC"/>
    <property type="match status" value="1"/>
</dbReference>
<dbReference type="Pfam" id="PF07479">
    <property type="entry name" value="NAD_Gly3P_dh_C"/>
    <property type="match status" value="1"/>
</dbReference>
<dbReference type="Pfam" id="PF01210">
    <property type="entry name" value="NAD_Gly3P_dh_N"/>
    <property type="match status" value="1"/>
</dbReference>
<dbReference type="PIRSF" id="PIRSF000114">
    <property type="entry name" value="Glycerol-3-P_dh"/>
    <property type="match status" value="1"/>
</dbReference>
<dbReference type="PRINTS" id="PR00077">
    <property type="entry name" value="GPDHDRGNASE"/>
</dbReference>
<dbReference type="SUPFAM" id="SSF48179">
    <property type="entry name" value="6-phosphogluconate dehydrogenase C-terminal domain-like"/>
    <property type="match status" value="1"/>
</dbReference>
<dbReference type="SUPFAM" id="SSF51735">
    <property type="entry name" value="NAD(P)-binding Rossmann-fold domains"/>
    <property type="match status" value="1"/>
</dbReference>
<dbReference type="PROSITE" id="PS00957">
    <property type="entry name" value="NAD_G3PDH"/>
    <property type="match status" value="1"/>
</dbReference>